<dbReference type="EMBL" id="U09329">
    <property type="protein sequence ID" value="AAA74455.1"/>
    <property type="molecule type" value="Genomic_DNA"/>
</dbReference>
<dbReference type="EMBL" id="Z72890">
    <property type="protein sequence ID" value="CAA97109.1"/>
    <property type="molecule type" value="Genomic_DNA"/>
</dbReference>
<dbReference type="EMBL" id="AY557816">
    <property type="protein sequence ID" value="AAS56142.1"/>
    <property type="molecule type" value="Genomic_DNA"/>
</dbReference>
<dbReference type="EMBL" id="BK006941">
    <property type="protein sequence ID" value="DAA08198.1"/>
    <property type="molecule type" value="Genomic_DNA"/>
</dbReference>
<dbReference type="PIR" id="S47941">
    <property type="entry name" value="S47941"/>
</dbReference>
<dbReference type="RefSeq" id="NP_011619.3">
    <property type="nucleotide sequence ID" value="NM_001181234.3"/>
</dbReference>
<dbReference type="PDB" id="8EAU">
    <property type="method" value="EM"/>
    <property type="resolution" value="3.10 A"/>
    <property type="chains" value="p=1-77"/>
</dbReference>
<dbReference type="PDBsum" id="8EAU"/>
<dbReference type="EMDB" id="EMD-27986"/>
<dbReference type="SMR" id="P41806"/>
<dbReference type="BioGRID" id="33348">
    <property type="interactions" value="923"/>
</dbReference>
<dbReference type="DIP" id="DIP-5526N"/>
<dbReference type="FunCoup" id="P41806">
    <property type="interactions" value="78"/>
</dbReference>
<dbReference type="IntAct" id="P41806">
    <property type="interactions" value="13"/>
</dbReference>
<dbReference type="MINT" id="P41806"/>
<dbReference type="STRING" id="4932.YGR105W"/>
<dbReference type="PaxDb" id="4932-YGR105W"/>
<dbReference type="PeptideAtlas" id="P41806"/>
<dbReference type="TopDownProteomics" id="P41806"/>
<dbReference type="EnsemblFungi" id="YGR105W_mRNA">
    <property type="protein sequence ID" value="YGR105W"/>
    <property type="gene ID" value="YGR105W"/>
</dbReference>
<dbReference type="GeneID" id="852997"/>
<dbReference type="KEGG" id="sce:YGR105W"/>
<dbReference type="AGR" id="SGD:S000003337"/>
<dbReference type="SGD" id="S000003337">
    <property type="gene designation" value="VMA21"/>
</dbReference>
<dbReference type="VEuPathDB" id="FungiDB:YGR105W"/>
<dbReference type="eggNOG" id="ENOG502SBNA">
    <property type="taxonomic scope" value="Eukaryota"/>
</dbReference>
<dbReference type="HOGENOM" id="CLU_154717_1_0_1"/>
<dbReference type="InParanoid" id="P41806"/>
<dbReference type="OMA" id="VMAFMED"/>
<dbReference type="OrthoDB" id="160405at2759"/>
<dbReference type="BioCyc" id="YEAST:G3O-30815-MONOMER"/>
<dbReference type="BioGRID-ORCS" id="852997">
    <property type="hits" value="2 hits in 10 CRISPR screens"/>
</dbReference>
<dbReference type="PRO" id="PR:P41806"/>
<dbReference type="Proteomes" id="UP000002311">
    <property type="component" value="Chromosome VII"/>
</dbReference>
<dbReference type="RNAct" id="P41806">
    <property type="molecule type" value="protein"/>
</dbReference>
<dbReference type="GO" id="GO:0005783">
    <property type="term" value="C:endoplasmic reticulum"/>
    <property type="evidence" value="ECO:0007005"/>
    <property type="project" value="SGD"/>
</dbReference>
<dbReference type="GO" id="GO:0005789">
    <property type="term" value="C:endoplasmic reticulum membrane"/>
    <property type="evidence" value="ECO:0000314"/>
    <property type="project" value="SGD"/>
</dbReference>
<dbReference type="GO" id="GO:0033116">
    <property type="term" value="C:endoplasmic reticulum-Golgi intermediate compartment membrane"/>
    <property type="evidence" value="ECO:0007669"/>
    <property type="project" value="UniProtKB-SubCell"/>
</dbReference>
<dbReference type="GO" id="GO:0012507">
    <property type="term" value="C:ER to Golgi transport vesicle membrane"/>
    <property type="evidence" value="ECO:0007669"/>
    <property type="project" value="UniProtKB-SubCell"/>
</dbReference>
<dbReference type="GO" id="GO:0070072">
    <property type="term" value="P:vacuolar proton-transporting V-type ATPase complex assembly"/>
    <property type="evidence" value="ECO:0000315"/>
    <property type="project" value="SGD"/>
</dbReference>
<dbReference type="HAMAP" id="MF_03058">
    <property type="entry name" value="VMA21"/>
    <property type="match status" value="1"/>
</dbReference>
<dbReference type="InterPro" id="IPR019013">
    <property type="entry name" value="Vma21"/>
</dbReference>
<dbReference type="PANTHER" id="PTHR31792">
    <property type="entry name" value="VACUOLAR ATPASE ASSEMBLY INTEGRAL MEMBRANE PROTEIN VMA21"/>
    <property type="match status" value="1"/>
</dbReference>
<dbReference type="PANTHER" id="PTHR31792:SF3">
    <property type="entry name" value="VACUOLAR ATPASE ASSEMBLY INTEGRAL MEMBRANE PROTEIN VMA21"/>
    <property type="match status" value="1"/>
</dbReference>
<dbReference type="Pfam" id="PF09446">
    <property type="entry name" value="VMA21"/>
    <property type="match status" value="1"/>
</dbReference>
<sequence>MAVDVPRAVINKLMLFTAAMVVLPVLTFFIIQQFTPNTLISGGLAAAMANVVLIVYIVVAFREDTEDHKVDGNKKED</sequence>
<name>VMA21_YEAST</name>
<accession>P41806</accession>
<accession>D6VUN7</accession>
<accession>Q6Q5Q3</accession>
<feature type="chain" id="PRO_0000065875" description="Vacuolar ATPase assembly integral membrane protein VMA21">
    <location>
        <begin position="1"/>
        <end position="77"/>
    </location>
</feature>
<feature type="topological domain" description="Cytoplasmic" evidence="1">
    <location>
        <begin position="1"/>
        <end position="13"/>
    </location>
</feature>
<feature type="transmembrane region" description="Helical" evidence="1">
    <location>
        <begin position="14"/>
        <end position="34"/>
    </location>
</feature>
<feature type="topological domain" description="Lumenal" evidence="1">
    <location>
        <begin position="35"/>
        <end position="38"/>
    </location>
</feature>
<feature type="transmembrane region" description="Helical" evidence="1">
    <location>
        <begin position="39"/>
        <end position="59"/>
    </location>
</feature>
<feature type="topological domain" description="Cytoplasmic" evidence="1">
    <location>
        <begin position="60"/>
        <end position="77"/>
    </location>
</feature>
<feature type="short sequence motif" description="Prevents secretion from ER">
    <location>
        <begin position="74"/>
        <end position="77"/>
    </location>
</feature>
<feature type="mutagenesis site" description="Mislocalizes to the vacuole membrane and stay associated with the V0 sector after transport out of the ER." evidence="3 7">
    <original>KK</original>
    <variation>QQ</variation>
    <location>
        <begin position="74"/>
        <end position="75"/>
    </location>
</feature>
<feature type="mutagenesis site" description="Secretion from ER.">
    <original>K</original>
    <variation>Q</variation>
    <location>
        <position position="74"/>
    </location>
</feature>
<feature type="mutagenesis site" description="Secretion from ER.">
    <original>K</original>
    <variation>Q</variation>
    <location>
        <position position="75"/>
    </location>
</feature>
<feature type="sequence conflict" description="In Ref. 4; AAS56142." evidence="9" ref="4">
    <original>V</original>
    <variation>G</variation>
    <location>
        <position position="70"/>
    </location>
</feature>
<feature type="helix" evidence="10">
    <location>
        <begin position="9"/>
        <end position="34"/>
    </location>
</feature>
<feature type="helix" evidence="10">
    <location>
        <begin position="38"/>
        <end position="62"/>
    </location>
</feature>
<keyword id="KW-0002">3D-structure</keyword>
<keyword id="KW-0968">Cytoplasmic vesicle</keyword>
<keyword id="KW-0256">Endoplasmic reticulum</keyword>
<keyword id="KW-0472">Membrane</keyword>
<keyword id="KW-1185">Reference proteome</keyword>
<keyword id="KW-0812">Transmembrane</keyword>
<keyword id="KW-1133">Transmembrane helix</keyword>
<proteinExistence type="evidence at protein level"/>
<protein>
    <recommendedName>
        <fullName evidence="1">Vacuolar ATPase assembly integral membrane protein VMA21</fullName>
    </recommendedName>
</protein>
<comment type="function">
    <text evidence="1 3 4 5 6 7 8">Functions with VOA1 in assembly of the integral membrane sector (also called V0 sector) of the V-ATPase in the endoplasmic reticulum. Escorts the assembled V0 sector in COPII vesicles. Also required for normal packaging of the SNARE BOS1 and possibly the ER to Golgi transport receptor ERV29.</text>
</comment>
<comment type="subcellular location">
    <subcellularLocation>
        <location>Endoplasmic reticulum membrane</location>
        <topology>Multi-pass membrane protein</topology>
    </subcellularLocation>
    <subcellularLocation>
        <location evidence="1">Endoplasmic reticulum-Golgi intermediate compartment membrane</location>
        <topology evidence="1">Multi-pass membrane protein</topology>
    </subcellularLocation>
    <subcellularLocation>
        <location>Cytoplasmic vesicle</location>
        <location>COPII-coated vesicle membrane</location>
        <topology>Multi-pass membrane protein</topology>
    </subcellularLocation>
</comment>
<comment type="miscellaneous">
    <text evidence="2">Present with 1480 molecules/cell in log phase SD medium.</text>
</comment>
<comment type="similarity">
    <text evidence="1">Belongs to the VMA21 family.</text>
</comment>
<gene>
    <name evidence="1" type="primary">VMA21</name>
    <name type="ordered locus">YGR105W</name>
</gene>
<reference key="1">
    <citation type="journal article" date="1994" name="Mol. Biol. Cell">
        <title>Vma21p is a yeast membrane protein retained in the endoplasmic reticulum by a di-lysine motif and is required for the assembly of the vacuolar H(+)-ATPase complex.</title>
        <authorList>
            <person name="Hill K.J."/>
            <person name="Stevens T.H."/>
        </authorList>
    </citation>
    <scope>NUCLEOTIDE SEQUENCE [GENOMIC DNA]</scope>
    <scope>FUNCTION</scope>
    <scope>SUBCELLULAR LOCATION</scope>
    <scope>MUTAGENESIS OF 74-LYS-LYS-75</scope>
    <source>
        <strain>SF838-1D</strain>
    </source>
</reference>
<reference key="2">
    <citation type="journal article" date="1997" name="Nature">
        <title>The nucleotide sequence of Saccharomyces cerevisiae chromosome VII.</title>
        <authorList>
            <person name="Tettelin H."/>
            <person name="Agostoni-Carbone M.L."/>
            <person name="Albermann K."/>
            <person name="Albers M."/>
            <person name="Arroyo J."/>
            <person name="Backes U."/>
            <person name="Barreiros T."/>
            <person name="Bertani I."/>
            <person name="Bjourson A.J."/>
            <person name="Brueckner M."/>
            <person name="Bruschi C.V."/>
            <person name="Carignani G."/>
            <person name="Castagnoli L."/>
            <person name="Cerdan E."/>
            <person name="Clemente M.L."/>
            <person name="Coblenz A."/>
            <person name="Coglievina M."/>
            <person name="Coissac E."/>
            <person name="Defoor E."/>
            <person name="Del Bino S."/>
            <person name="Delius H."/>
            <person name="Delneri D."/>
            <person name="de Wergifosse P."/>
            <person name="Dujon B."/>
            <person name="Durand P."/>
            <person name="Entian K.-D."/>
            <person name="Eraso P."/>
            <person name="Escribano V."/>
            <person name="Fabiani L."/>
            <person name="Fartmann B."/>
            <person name="Feroli F."/>
            <person name="Feuermann M."/>
            <person name="Frontali L."/>
            <person name="Garcia-Gonzalez M."/>
            <person name="Garcia-Saez M.I."/>
            <person name="Goffeau A."/>
            <person name="Guerreiro P."/>
            <person name="Hani J."/>
            <person name="Hansen M."/>
            <person name="Hebling U."/>
            <person name="Hernandez K."/>
            <person name="Heumann K."/>
            <person name="Hilger F."/>
            <person name="Hofmann B."/>
            <person name="Indge K.J."/>
            <person name="James C.M."/>
            <person name="Klima R."/>
            <person name="Koetter P."/>
            <person name="Kramer B."/>
            <person name="Kramer W."/>
            <person name="Lauquin G."/>
            <person name="Leuther H."/>
            <person name="Louis E.J."/>
            <person name="Maillier E."/>
            <person name="Marconi A."/>
            <person name="Martegani E."/>
            <person name="Mazon M.J."/>
            <person name="Mazzoni C."/>
            <person name="McReynolds A.D.K."/>
            <person name="Melchioretto P."/>
            <person name="Mewes H.-W."/>
            <person name="Minenkova O."/>
            <person name="Mueller-Auer S."/>
            <person name="Nawrocki A."/>
            <person name="Netter P."/>
            <person name="Neu R."/>
            <person name="Nombela C."/>
            <person name="Oliver S.G."/>
            <person name="Panzeri L."/>
            <person name="Paoluzi S."/>
            <person name="Plevani P."/>
            <person name="Portetelle D."/>
            <person name="Portillo F."/>
            <person name="Potier S."/>
            <person name="Purnelle B."/>
            <person name="Rieger M."/>
            <person name="Riles L."/>
            <person name="Rinaldi T."/>
            <person name="Robben J."/>
            <person name="Rodrigues-Pousada C."/>
            <person name="Rodriguez-Belmonte E."/>
            <person name="Rodriguez-Torres A.M."/>
            <person name="Rose M."/>
            <person name="Ruzzi M."/>
            <person name="Saliola M."/>
            <person name="Sanchez-Perez M."/>
            <person name="Schaefer B."/>
            <person name="Schaefer M."/>
            <person name="Scharfe M."/>
            <person name="Schmidheini T."/>
            <person name="Schreer A."/>
            <person name="Skala J."/>
            <person name="Souciet J.-L."/>
            <person name="Steensma H.Y."/>
            <person name="Talla E."/>
            <person name="Thierry A."/>
            <person name="Vandenbol M."/>
            <person name="van der Aart Q.J.M."/>
            <person name="Van Dyck L."/>
            <person name="Vanoni M."/>
            <person name="Verhasselt P."/>
            <person name="Voet M."/>
            <person name="Volckaert G."/>
            <person name="Wambutt R."/>
            <person name="Watson M.D."/>
            <person name="Weber N."/>
            <person name="Wedler E."/>
            <person name="Wedler H."/>
            <person name="Wipfli P."/>
            <person name="Wolf K."/>
            <person name="Wright L.F."/>
            <person name="Zaccaria P."/>
            <person name="Zimmermann M."/>
            <person name="Zollner A."/>
            <person name="Kleine K."/>
        </authorList>
    </citation>
    <scope>NUCLEOTIDE SEQUENCE [LARGE SCALE GENOMIC DNA]</scope>
    <source>
        <strain>ATCC 204508 / S288c</strain>
    </source>
</reference>
<reference key="3">
    <citation type="journal article" date="2014" name="G3 (Bethesda)">
        <title>The reference genome sequence of Saccharomyces cerevisiae: Then and now.</title>
        <authorList>
            <person name="Engel S.R."/>
            <person name="Dietrich F.S."/>
            <person name="Fisk D.G."/>
            <person name="Binkley G."/>
            <person name="Balakrishnan R."/>
            <person name="Costanzo M.C."/>
            <person name="Dwight S.S."/>
            <person name="Hitz B.C."/>
            <person name="Karra K."/>
            <person name="Nash R.S."/>
            <person name="Weng S."/>
            <person name="Wong E.D."/>
            <person name="Lloyd P."/>
            <person name="Skrzypek M.S."/>
            <person name="Miyasato S.R."/>
            <person name="Simison M."/>
            <person name="Cherry J.M."/>
        </authorList>
    </citation>
    <scope>GENOME REANNOTATION</scope>
    <source>
        <strain>ATCC 204508 / S288c</strain>
    </source>
</reference>
<reference key="4">
    <citation type="journal article" date="2007" name="Genome Res.">
        <title>Approaching a complete repository of sequence-verified protein-encoding clones for Saccharomyces cerevisiae.</title>
        <authorList>
            <person name="Hu Y."/>
            <person name="Rolfs A."/>
            <person name="Bhullar B."/>
            <person name="Murthy T.V.S."/>
            <person name="Zhu C."/>
            <person name="Berger M.F."/>
            <person name="Camargo A.A."/>
            <person name="Kelley F."/>
            <person name="McCarron S."/>
            <person name="Jepson D."/>
            <person name="Richardson A."/>
            <person name="Raphael J."/>
            <person name="Moreira D."/>
            <person name="Taycher E."/>
            <person name="Zuo D."/>
            <person name="Mohr S."/>
            <person name="Kane M.F."/>
            <person name="Williamson J."/>
            <person name="Simpson A.J.G."/>
            <person name="Bulyk M.L."/>
            <person name="Harlow E."/>
            <person name="Marsischky G."/>
            <person name="Kolodner R.D."/>
            <person name="LaBaer J."/>
        </authorList>
    </citation>
    <scope>NUCLEOTIDE SEQUENCE [GENOMIC DNA]</scope>
    <source>
        <strain>ATCC 204508 / S288c</strain>
    </source>
</reference>
<reference key="5">
    <citation type="journal article" date="1993" name="J. Biol. Chem.">
        <title>Isolation of vacuolar membrane H(+)-ATPase-deficient yeast mutants; the VMA5 and VMA4 genes are essential for assembly and activity of the vacuolar H(+)-ATPase.</title>
        <authorList>
            <person name="Ho M.N."/>
            <person name="Hill K.J."/>
            <person name="Lindorfer M.A."/>
            <person name="Stevens T.H."/>
        </authorList>
    </citation>
    <scope>FUNCTION</scope>
</reference>
<reference key="6">
    <citation type="journal article" date="2003" name="Nature">
        <title>Global analysis of protein expression in yeast.</title>
        <authorList>
            <person name="Ghaemmaghami S."/>
            <person name="Huh W.-K."/>
            <person name="Bower K."/>
            <person name="Howson R.W."/>
            <person name="Belle A."/>
            <person name="Dephoure N."/>
            <person name="O'Shea E.K."/>
            <person name="Weissman J.S."/>
        </authorList>
    </citation>
    <scope>LEVEL OF PROTEIN EXPRESSION [LARGE SCALE ANALYSIS]</scope>
</reference>
<reference key="7">
    <citation type="journal article" date="2004" name="Mol. Biol. Cell">
        <title>Role of Vma21p in assembly and transport of the yeast vacuolar ATPase.</title>
        <authorList>
            <person name="Malkus P."/>
            <person name="Graham L.A."/>
            <person name="Stevens T.H."/>
            <person name="Schekman R."/>
        </authorList>
    </citation>
    <scope>FUNCTION</scope>
    <scope>INTERACTION WITH VMA3; VMA6; VMA11; VMA16 AND VPH1</scope>
    <scope>MUTAGENESIS OF 74-LYS-LYS-75</scope>
</reference>
<reference key="8">
    <citation type="journal article" date="2006" name="J. Biol. Chem.">
        <title>Vma9p (subunit e) is an integral membrane V0 subunit of the yeast V-ATPase.</title>
        <authorList>
            <person name="Compton M.A."/>
            <person name="Graham L.A."/>
            <person name="Stevens T.H."/>
        </authorList>
    </citation>
    <scope>INTERACTION WITH VMA3; VMA6; VMA11 AND VPH1</scope>
</reference>
<reference key="9">
    <citation type="journal article" date="2006" name="J. Biol. Chem.">
        <title>PKR1 encodes an assembly factor for the yeast V-type ATPase.</title>
        <authorList>
            <person name="Davis-Kaplan S.R."/>
            <person name="Compton M.A."/>
            <person name="Flannery A.R."/>
            <person name="Ward D.M."/>
            <person name="Kaplan J."/>
            <person name="Stevens T.H."/>
            <person name="Graham L.A."/>
        </authorList>
    </citation>
    <scope>FUNCTION</scope>
</reference>
<reference key="10">
    <citation type="journal article" date="2006" name="J. Cell Sci.">
        <title>Genetic and molecular interactions of the Erv41p-Erv46p complex involved in transport between the endoplasmic reticulum and Golgi complex.</title>
        <authorList>
            <person name="Welsh L.M."/>
            <person name="Tong A.H.Y."/>
            <person name="Boone C."/>
            <person name="Jensen O.N."/>
            <person name="Otte S."/>
        </authorList>
    </citation>
    <scope>FUNCTION</scope>
</reference>
<reference key="11">
    <citation type="journal article" date="2006" name="Proc. Natl. Acad. Sci. U.S.A.">
        <title>A global topology map of the Saccharomyces cerevisiae membrane proteome.</title>
        <authorList>
            <person name="Kim H."/>
            <person name="Melen K."/>
            <person name="Oesterberg M."/>
            <person name="von Heijne G."/>
        </authorList>
    </citation>
    <scope>TOPOLOGY [LARGE SCALE ANALYSIS]</scope>
    <source>
        <strain>ATCC 208353 / W303-1A</strain>
    </source>
</reference>
<reference key="12">
    <citation type="journal article" date="2008" name="Mol. Biol. Cell">
        <title>Voa1p functions in V-ATPase assembly in the yeast endoplasmic reticulum.</title>
        <authorList>
            <person name="Ryan M."/>
            <person name="Graham L.A."/>
            <person name="Stevens T.H."/>
        </authorList>
    </citation>
    <scope>FUNCTION</scope>
    <scope>SUBCELLULAR LOCATION</scope>
    <scope>INTERACTION WITH VMA3; VMA6; VMA11; VMA16 AND VOA1</scope>
</reference>
<organism>
    <name type="scientific">Saccharomyces cerevisiae (strain ATCC 204508 / S288c)</name>
    <name type="common">Baker's yeast</name>
    <dbReference type="NCBI Taxonomy" id="559292"/>
    <lineage>
        <taxon>Eukaryota</taxon>
        <taxon>Fungi</taxon>
        <taxon>Dikarya</taxon>
        <taxon>Ascomycota</taxon>
        <taxon>Saccharomycotina</taxon>
        <taxon>Saccharomycetes</taxon>
        <taxon>Saccharomycetales</taxon>
        <taxon>Saccharomycetaceae</taxon>
        <taxon>Saccharomyces</taxon>
    </lineage>
</organism>
<evidence type="ECO:0000255" key="1">
    <source>
        <dbReference type="HAMAP-Rule" id="MF_03058"/>
    </source>
</evidence>
<evidence type="ECO:0000269" key="2">
    <source>
    </source>
</evidence>
<evidence type="ECO:0000269" key="3">
    <source>
    </source>
</evidence>
<evidence type="ECO:0000269" key="4">
    <source>
    </source>
</evidence>
<evidence type="ECO:0000269" key="5">
    <source>
    </source>
</evidence>
<evidence type="ECO:0000269" key="6">
    <source>
    </source>
</evidence>
<evidence type="ECO:0000269" key="7">
    <source>
    </source>
</evidence>
<evidence type="ECO:0000269" key="8">
    <source>
    </source>
</evidence>
<evidence type="ECO:0000305" key="9"/>
<evidence type="ECO:0007829" key="10">
    <source>
        <dbReference type="PDB" id="8EAU"/>
    </source>
</evidence>